<accession>P09964</accession>
<accession>Q38659</accession>
<accession>Q7PCF1</accession>
<reference key="1">
    <citation type="journal article" date="1986" name="Biochemistry">
        <title>Bacteriophage P22 Cro protein: sequence, purification, and properties.</title>
        <authorList>
            <person name="Poteete A.R."/>
            <person name="Hehir K."/>
            <person name="Sauer R.T."/>
        </authorList>
    </citation>
    <scope>NUCLEOTIDE SEQUENCE [GENOMIC DNA]</scope>
</reference>
<reference key="2">
    <citation type="journal article" date="2000" name="J. Bacteriol.">
        <title>Sequence of the genome of Salmonella bacteriophage P22.</title>
        <authorList>
            <person name="Vander Byl C.S."/>
            <person name="Kropinski A.M.B."/>
        </authorList>
    </citation>
    <scope>NUCLEOTIDE SEQUENCE [LARGE SCALE GENOMIC DNA]</scope>
</reference>
<reference key="3">
    <citation type="journal article" date="2003" name="J. Bacteriol.">
        <title>Corrected sequence of the bacteriophage P22 genome.</title>
        <authorList>
            <person name="Pedulla M.L."/>
            <person name="Ford M.E."/>
            <person name="Karthikeyan T."/>
            <person name="Houtz J.M."/>
            <person name="Hendrix R.W."/>
            <person name="Hatfull G.F."/>
            <person name="Poteete A.R."/>
            <person name="Gilcrease E.B."/>
            <person name="Winn-Stapley D.A."/>
            <person name="Casjens S.R."/>
        </authorList>
    </citation>
    <scope>NUCLEOTIDE SEQUENCE [LARGE SCALE GENOMIC DNA]</scope>
</reference>
<reference key="4">
    <citation type="journal article" date="1984" name="Gene">
        <title>Sequence analysis of a region from the early right operon in phage P22 including the replication genes 18 and 12.</title>
        <authorList>
            <person name="Backhaus H."/>
            <person name="Petri J.B."/>
        </authorList>
    </citation>
    <scope>NUCLEOTIDE SEQUENCE [GENOMIC DNA] OF 47-61</scope>
</reference>
<reference key="5">
    <citation type="journal article" date="2004" name="Structure">
        <title>Secondary structure switching in Cro protein evolution.</title>
        <authorList>
            <person name="Newlove T."/>
            <person name="Konieczka J.H."/>
            <person name="Cordes M.H."/>
        </authorList>
    </citation>
    <scope>STRUCTURE BY NMR</scope>
</reference>
<feature type="chain" id="PRO_0000077578" description="Regulatory protein cro">
    <location>
        <begin position="1"/>
        <end position="61"/>
    </location>
</feature>
<feature type="DNA-binding region" description="H-T-H motif" evidence="1">
    <location>
        <begin position="13"/>
        <end position="32"/>
    </location>
</feature>
<feature type="helix" evidence="2">
    <location>
        <begin position="3"/>
        <end position="10"/>
    </location>
</feature>
<feature type="helix" evidence="2">
    <location>
        <begin position="13"/>
        <end position="20"/>
    </location>
</feature>
<feature type="helix" evidence="2">
    <location>
        <begin position="24"/>
        <end position="29"/>
    </location>
</feature>
<feature type="helix" evidence="2">
    <location>
        <begin position="36"/>
        <end position="45"/>
    </location>
</feature>
<organismHost>
    <name type="scientific">Salmonella typhimurium</name>
    <dbReference type="NCBI Taxonomy" id="90371"/>
</organismHost>
<protein>
    <recommendedName>
        <fullName>Regulatory protein cro</fullName>
    </recommendedName>
    <alternativeName>
        <fullName>Antirepressor</fullName>
    </alternativeName>
</protein>
<gene>
    <name type="primary">cro</name>
</gene>
<comment type="function">
    <text>Cro represses genes normally expressed in early phage development and is necessary for the late stage of lytic growth. It does this by binding to the OL and OR operators regions normally used by the repressor protein for lysogenic maintenance.</text>
</comment>
<organism>
    <name type="scientific">Salmonella phage P22</name>
    <name type="common">Bacteriophage P22</name>
    <dbReference type="NCBI Taxonomy" id="10754"/>
    <lineage>
        <taxon>Viruses</taxon>
        <taxon>Duplodnaviria</taxon>
        <taxon>Heunggongvirae</taxon>
        <taxon>Uroviricota</taxon>
        <taxon>Caudoviricetes</taxon>
        <taxon>Lederbergvirus</taxon>
    </lineage>
</organism>
<evidence type="ECO:0000255" key="1"/>
<evidence type="ECO:0007829" key="2">
    <source>
        <dbReference type="PDB" id="1RZS"/>
    </source>
</evidence>
<proteinExistence type="evidence at protein level"/>
<sequence length="61" mass="6828">MYKKDVIDHFGTQRAVAKALGISDAAVSQWKEVIPEKDAYRLEIVTAGALKYQENAYRQAA</sequence>
<keyword id="KW-0002">3D-structure</keyword>
<keyword id="KW-0238">DNA-binding</keyword>
<keyword id="KW-0244">Early protein</keyword>
<keyword id="KW-1185">Reference proteome</keyword>
<keyword id="KW-0678">Repressor</keyword>
<keyword id="KW-0804">Transcription</keyword>
<keyword id="KW-0805">Transcription regulation</keyword>
<name>RCRO_BPP22</name>
<dbReference type="EMBL" id="M12584">
    <property type="protein sequence ID" value="AAA32268.1"/>
    <property type="molecule type" value="Genomic_DNA"/>
</dbReference>
<dbReference type="EMBL" id="AF217253">
    <property type="protein sequence ID" value="AAF75025.1"/>
    <property type="molecule type" value="Genomic_DNA"/>
</dbReference>
<dbReference type="EMBL" id="BK000583">
    <property type="protein sequence ID" value="DAA01022.1"/>
    <property type="molecule type" value="Genomic_DNA"/>
</dbReference>
<dbReference type="EMBL" id="M10074">
    <property type="protein sequence ID" value="AAA32273.1"/>
    <property type="molecule type" value="Genomic_DNA"/>
</dbReference>
<dbReference type="PIR" id="A25867">
    <property type="entry name" value="RGBP22"/>
</dbReference>
<dbReference type="RefSeq" id="NP_059607.1">
    <property type="nucleotide sequence ID" value="NC_002371.2"/>
</dbReference>
<dbReference type="PDB" id="1RZS">
    <property type="method" value="NMR"/>
    <property type="chains" value="A=1-61"/>
</dbReference>
<dbReference type="PDBsum" id="1RZS"/>
<dbReference type="BMRB" id="P09964"/>
<dbReference type="SMR" id="P09964"/>
<dbReference type="GeneID" id="1262827"/>
<dbReference type="KEGG" id="vg:1262827"/>
<dbReference type="OrthoDB" id="23891at10239"/>
<dbReference type="EvolutionaryTrace" id="P09964"/>
<dbReference type="Proteomes" id="UP000001795">
    <property type="component" value="Segment"/>
</dbReference>
<dbReference type="Proteomes" id="UP000007960">
    <property type="component" value="Segment"/>
</dbReference>
<dbReference type="GO" id="GO:0003677">
    <property type="term" value="F:DNA binding"/>
    <property type="evidence" value="ECO:0007669"/>
    <property type="project" value="UniProtKB-KW"/>
</dbReference>
<dbReference type="Gene3D" id="1.10.260.40">
    <property type="entry name" value="lambda repressor-like DNA-binding domains"/>
    <property type="match status" value="1"/>
</dbReference>
<dbReference type="InterPro" id="IPR010982">
    <property type="entry name" value="Lambda_DNA-bd_dom_sf"/>
</dbReference>
<dbReference type="Pfam" id="PF14549">
    <property type="entry name" value="P22_Cro"/>
    <property type="match status" value="1"/>
</dbReference>
<dbReference type="SUPFAM" id="SSF47413">
    <property type="entry name" value="lambda repressor-like DNA-binding domains"/>
    <property type="match status" value="1"/>
</dbReference>